<proteinExistence type="inferred from homology"/>
<feature type="chain" id="PRO_0000377355" description="tRNA dimethylallyltransferase">
    <location>
        <begin position="1"/>
        <end position="314"/>
    </location>
</feature>
<feature type="region of interest" description="Interaction with substrate tRNA" evidence="1">
    <location>
        <begin position="31"/>
        <end position="34"/>
    </location>
</feature>
<feature type="binding site" evidence="1">
    <location>
        <begin position="6"/>
        <end position="13"/>
    </location>
    <ligand>
        <name>ATP</name>
        <dbReference type="ChEBI" id="CHEBI:30616"/>
    </ligand>
</feature>
<feature type="binding site" evidence="1">
    <location>
        <begin position="8"/>
        <end position="13"/>
    </location>
    <ligand>
        <name>substrate</name>
    </ligand>
</feature>
<feature type="site" description="Interaction with substrate tRNA" evidence="1">
    <location>
        <position position="97"/>
    </location>
</feature>
<keyword id="KW-0067">ATP-binding</keyword>
<keyword id="KW-0460">Magnesium</keyword>
<keyword id="KW-0547">Nucleotide-binding</keyword>
<keyword id="KW-1185">Reference proteome</keyword>
<keyword id="KW-0808">Transferase</keyword>
<keyword id="KW-0819">tRNA processing</keyword>
<organism>
    <name type="scientific">Pseudothermotoga lettingae (strain ATCC BAA-301 / DSM 14385 / NBRC 107922 / TMO)</name>
    <name type="common">Thermotoga lettingae</name>
    <dbReference type="NCBI Taxonomy" id="416591"/>
    <lineage>
        <taxon>Bacteria</taxon>
        <taxon>Thermotogati</taxon>
        <taxon>Thermotogota</taxon>
        <taxon>Thermotogae</taxon>
        <taxon>Thermotogales</taxon>
        <taxon>Thermotogaceae</taxon>
        <taxon>Pseudothermotoga</taxon>
    </lineage>
</organism>
<gene>
    <name evidence="1" type="primary">miaA</name>
    <name type="ordered locus">Tlet_0781</name>
</gene>
<protein>
    <recommendedName>
        <fullName evidence="1">tRNA dimethylallyltransferase</fullName>
        <ecNumber evidence="1">2.5.1.75</ecNumber>
    </recommendedName>
    <alternativeName>
        <fullName evidence="1">Dimethylallyl diphosphate:tRNA dimethylallyltransferase</fullName>
        <shortName evidence="1">DMAPP:tRNA dimethylallyltransferase</shortName>
        <shortName evidence="1">DMATase</shortName>
    </alternativeName>
    <alternativeName>
        <fullName evidence="1">Isopentenyl-diphosphate:tRNA isopentenyltransferase</fullName>
        <shortName evidence="1">IPP transferase</shortName>
        <shortName evidence="1">IPPT</shortName>
        <shortName evidence="1">IPTase</shortName>
    </alternativeName>
</protein>
<accession>A8F5B3</accession>
<sequence>MIIITGPTAVGKTDLSIAICCKLNAEIVSIDSRQLYRYMDIGTGKPTLSQRKIVRHHLIDIVDPDEYYSVYQFRLDAIRAIQDIVKRGKIPLFAGGTGLYIDSLVRGIFEGVSRDEELRKQLLQKETQCPGVLRSMLERIDPELADRIHKNDLKRTVRALEIWIKSKEKPSELRKKVKPVGRFTVIILHRDREELYDRINLRVNEMFQAGLLDEVKDLMKRGYSKNLNALRTIGYQESIAHLEGKLNFESTVELVKKNTRHFARRQVIWFRRYKDAIVIDLSSSSYRDAVNTISRIVLQDFQHDSFYDGGFSYD</sequence>
<reference key="1">
    <citation type="submission" date="2007-08" db="EMBL/GenBank/DDBJ databases">
        <title>Complete sequence of Thermotoga lettingae TMO.</title>
        <authorList>
            <consortium name="US DOE Joint Genome Institute"/>
            <person name="Copeland A."/>
            <person name="Lucas S."/>
            <person name="Lapidus A."/>
            <person name="Barry K."/>
            <person name="Glavina del Rio T."/>
            <person name="Dalin E."/>
            <person name="Tice H."/>
            <person name="Pitluck S."/>
            <person name="Foster B."/>
            <person name="Bruce D."/>
            <person name="Schmutz J."/>
            <person name="Larimer F."/>
            <person name="Land M."/>
            <person name="Hauser L."/>
            <person name="Kyrpides N."/>
            <person name="Mikhailova N."/>
            <person name="Nelson K."/>
            <person name="Gogarten J.P."/>
            <person name="Noll K."/>
            <person name="Richardson P."/>
        </authorList>
    </citation>
    <scope>NUCLEOTIDE SEQUENCE [LARGE SCALE GENOMIC DNA]</scope>
    <source>
        <strain>ATCC BAA-301 / DSM 14385 / NBRC 107922 / TMO</strain>
    </source>
</reference>
<dbReference type="EC" id="2.5.1.75" evidence="1"/>
<dbReference type="EMBL" id="CP000812">
    <property type="protein sequence ID" value="ABV33347.1"/>
    <property type="molecule type" value="Genomic_DNA"/>
</dbReference>
<dbReference type="RefSeq" id="WP_012002828.1">
    <property type="nucleotide sequence ID" value="NZ_BSDV01000001.1"/>
</dbReference>
<dbReference type="SMR" id="A8F5B3"/>
<dbReference type="STRING" id="416591.Tlet_0781"/>
<dbReference type="KEGG" id="tle:Tlet_0781"/>
<dbReference type="eggNOG" id="COG0324">
    <property type="taxonomic scope" value="Bacteria"/>
</dbReference>
<dbReference type="HOGENOM" id="CLU_032616_0_0_0"/>
<dbReference type="OrthoDB" id="9776390at2"/>
<dbReference type="Proteomes" id="UP000002016">
    <property type="component" value="Chromosome"/>
</dbReference>
<dbReference type="GO" id="GO:0005524">
    <property type="term" value="F:ATP binding"/>
    <property type="evidence" value="ECO:0007669"/>
    <property type="project" value="UniProtKB-UniRule"/>
</dbReference>
<dbReference type="GO" id="GO:0052381">
    <property type="term" value="F:tRNA dimethylallyltransferase activity"/>
    <property type="evidence" value="ECO:0007669"/>
    <property type="project" value="UniProtKB-UniRule"/>
</dbReference>
<dbReference type="GO" id="GO:0006400">
    <property type="term" value="P:tRNA modification"/>
    <property type="evidence" value="ECO:0007669"/>
    <property type="project" value="TreeGrafter"/>
</dbReference>
<dbReference type="Gene3D" id="1.10.20.140">
    <property type="match status" value="1"/>
</dbReference>
<dbReference type="Gene3D" id="3.40.50.300">
    <property type="entry name" value="P-loop containing nucleotide triphosphate hydrolases"/>
    <property type="match status" value="1"/>
</dbReference>
<dbReference type="HAMAP" id="MF_00185">
    <property type="entry name" value="IPP_trans"/>
    <property type="match status" value="1"/>
</dbReference>
<dbReference type="InterPro" id="IPR039657">
    <property type="entry name" value="Dimethylallyltransferase"/>
</dbReference>
<dbReference type="InterPro" id="IPR018022">
    <property type="entry name" value="IPT"/>
</dbReference>
<dbReference type="InterPro" id="IPR027417">
    <property type="entry name" value="P-loop_NTPase"/>
</dbReference>
<dbReference type="NCBIfam" id="TIGR00174">
    <property type="entry name" value="miaA"/>
    <property type="match status" value="1"/>
</dbReference>
<dbReference type="PANTHER" id="PTHR11088">
    <property type="entry name" value="TRNA DIMETHYLALLYLTRANSFERASE"/>
    <property type="match status" value="1"/>
</dbReference>
<dbReference type="PANTHER" id="PTHR11088:SF60">
    <property type="entry name" value="TRNA DIMETHYLALLYLTRANSFERASE"/>
    <property type="match status" value="1"/>
</dbReference>
<dbReference type="Pfam" id="PF01715">
    <property type="entry name" value="IPPT"/>
    <property type="match status" value="1"/>
</dbReference>
<dbReference type="SUPFAM" id="SSF52540">
    <property type="entry name" value="P-loop containing nucleoside triphosphate hydrolases"/>
    <property type="match status" value="2"/>
</dbReference>
<comment type="function">
    <text evidence="1">Catalyzes the transfer of a dimethylallyl group onto the adenine at position 37 in tRNAs that read codons beginning with uridine, leading to the formation of N6-(dimethylallyl)adenosine (i(6)A).</text>
</comment>
<comment type="catalytic activity">
    <reaction evidence="1">
        <text>adenosine(37) in tRNA + dimethylallyl diphosphate = N(6)-dimethylallyladenosine(37) in tRNA + diphosphate</text>
        <dbReference type="Rhea" id="RHEA:26482"/>
        <dbReference type="Rhea" id="RHEA-COMP:10162"/>
        <dbReference type="Rhea" id="RHEA-COMP:10375"/>
        <dbReference type="ChEBI" id="CHEBI:33019"/>
        <dbReference type="ChEBI" id="CHEBI:57623"/>
        <dbReference type="ChEBI" id="CHEBI:74411"/>
        <dbReference type="ChEBI" id="CHEBI:74415"/>
        <dbReference type="EC" id="2.5.1.75"/>
    </reaction>
</comment>
<comment type="cofactor">
    <cofactor evidence="1">
        <name>Mg(2+)</name>
        <dbReference type="ChEBI" id="CHEBI:18420"/>
    </cofactor>
</comment>
<comment type="subunit">
    <text evidence="1">Monomer.</text>
</comment>
<comment type="similarity">
    <text evidence="1">Belongs to the IPP transferase family.</text>
</comment>
<evidence type="ECO:0000255" key="1">
    <source>
        <dbReference type="HAMAP-Rule" id="MF_00185"/>
    </source>
</evidence>
<name>MIAA_PSELT</name>